<comment type="function">
    <text evidence="1">Transfers the gamma-phosphate of ATP to the 4'-position of a tetraacyldisaccharide 1-phosphate intermediate (termed DS-1-P) to form tetraacyldisaccharide 1,4'-bis-phosphate (lipid IVA).</text>
</comment>
<comment type="catalytic activity">
    <reaction evidence="1">
        <text>a lipid A disaccharide + ATP = a lipid IVA + ADP + H(+)</text>
        <dbReference type="Rhea" id="RHEA:67840"/>
        <dbReference type="ChEBI" id="CHEBI:15378"/>
        <dbReference type="ChEBI" id="CHEBI:30616"/>
        <dbReference type="ChEBI" id="CHEBI:176343"/>
        <dbReference type="ChEBI" id="CHEBI:176425"/>
        <dbReference type="ChEBI" id="CHEBI:456216"/>
        <dbReference type="EC" id="2.7.1.130"/>
    </reaction>
</comment>
<comment type="pathway">
    <text evidence="1">Glycolipid biosynthesis; lipid IV(A) biosynthesis; lipid IV(A) from (3R)-3-hydroxytetradecanoyl-[acyl-carrier-protein] and UDP-N-acetyl-alpha-D-glucosamine: step 6/6.</text>
</comment>
<comment type="similarity">
    <text evidence="1">Belongs to the LpxK family.</text>
</comment>
<reference key="1">
    <citation type="submission" date="2006-03" db="EMBL/GenBank/DDBJ databases">
        <title>Complete genome sequence of Francisella tularensis LVS (Live Vaccine Strain).</title>
        <authorList>
            <person name="Chain P."/>
            <person name="Larimer F."/>
            <person name="Land M."/>
            <person name="Stilwagen S."/>
            <person name="Larsson P."/>
            <person name="Bearden S."/>
            <person name="Chu M."/>
            <person name="Oyston P."/>
            <person name="Forsman M."/>
            <person name="Andersson S."/>
            <person name="Lindler L."/>
            <person name="Titball R."/>
            <person name="Garcia E."/>
        </authorList>
    </citation>
    <scope>NUCLEOTIDE SEQUENCE [LARGE SCALE GENOMIC DNA]</scope>
    <source>
        <strain>LVS</strain>
    </source>
</reference>
<accession>Q2A1V0</accession>
<name>LPXK_FRATH</name>
<gene>
    <name evidence="1" type="primary">lpxK</name>
    <name type="ordered locus">FTL_1667</name>
</gene>
<keyword id="KW-0067">ATP-binding</keyword>
<keyword id="KW-0418">Kinase</keyword>
<keyword id="KW-0441">Lipid A biosynthesis</keyword>
<keyword id="KW-0444">Lipid biosynthesis</keyword>
<keyword id="KW-0443">Lipid metabolism</keyword>
<keyword id="KW-0547">Nucleotide-binding</keyword>
<keyword id="KW-1185">Reference proteome</keyword>
<keyword id="KW-0808">Transferase</keyword>
<proteinExistence type="inferred from homology"/>
<organism>
    <name type="scientific">Francisella tularensis subsp. holarctica (strain LVS)</name>
    <dbReference type="NCBI Taxonomy" id="376619"/>
    <lineage>
        <taxon>Bacteria</taxon>
        <taxon>Pseudomonadati</taxon>
        <taxon>Pseudomonadota</taxon>
        <taxon>Gammaproteobacteria</taxon>
        <taxon>Thiotrichales</taxon>
        <taxon>Francisellaceae</taxon>
        <taxon>Francisella</taxon>
    </lineage>
</organism>
<feature type="chain" id="PRO_1000049894" description="Tetraacyldisaccharide 4'-kinase">
    <location>
        <begin position="1"/>
        <end position="322"/>
    </location>
</feature>
<feature type="binding site" evidence="1">
    <location>
        <begin position="54"/>
        <end position="61"/>
    </location>
    <ligand>
        <name>ATP</name>
        <dbReference type="ChEBI" id="CHEBI:30616"/>
    </ligand>
</feature>
<evidence type="ECO:0000255" key="1">
    <source>
        <dbReference type="HAMAP-Rule" id="MF_00409"/>
    </source>
</evidence>
<sequence>MLDKIWYRSKPNLLSRVLQPISLVFIDIANKRKIKQQLKQYKSKIPIIVVGNISVGGTGKTPVVRMLVQQYLAQDKKPAIISRGYGAKADNYPFEVTSGTLATQCGDEPAMLFDALQAQVPIVIAPERVQAVKYIEKNFPDTDIIMSDDGLQHYKLARDKEIVVVDAIRMFGNKLCLPAGPLREPIERLKEVDQIIVIGNCSDKDKELLKNYKNVTYAKVVATEFVNILTAKKVAKTEFNHQNAIAIAGIGNPTKFFKTLEESAINITAKKVFKDHHKFTQSDFEGIDSDITVVMTYKDAIKCKNFAKANWWYLDIALDINV</sequence>
<protein>
    <recommendedName>
        <fullName evidence="1">Tetraacyldisaccharide 4'-kinase</fullName>
        <ecNumber evidence="1">2.7.1.130</ecNumber>
    </recommendedName>
    <alternativeName>
        <fullName evidence="1">Lipid A 4'-kinase</fullName>
    </alternativeName>
</protein>
<dbReference type="EC" id="2.7.1.130" evidence="1"/>
<dbReference type="EMBL" id="AM233362">
    <property type="protein sequence ID" value="CAJ80106.1"/>
    <property type="molecule type" value="Genomic_DNA"/>
</dbReference>
<dbReference type="RefSeq" id="WP_003017106.1">
    <property type="nucleotide sequence ID" value="NZ_CP009694.1"/>
</dbReference>
<dbReference type="SMR" id="Q2A1V0"/>
<dbReference type="KEGG" id="ftl:FTL_1667"/>
<dbReference type="UniPathway" id="UPA00359">
    <property type="reaction ID" value="UER00482"/>
</dbReference>
<dbReference type="Proteomes" id="UP000001944">
    <property type="component" value="Chromosome"/>
</dbReference>
<dbReference type="GO" id="GO:0005886">
    <property type="term" value="C:plasma membrane"/>
    <property type="evidence" value="ECO:0007669"/>
    <property type="project" value="TreeGrafter"/>
</dbReference>
<dbReference type="GO" id="GO:0005524">
    <property type="term" value="F:ATP binding"/>
    <property type="evidence" value="ECO:0007669"/>
    <property type="project" value="UniProtKB-UniRule"/>
</dbReference>
<dbReference type="GO" id="GO:0009029">
    <property type="term" value="F:tetraacyldisaccharide 4'-kinase activity"/>
    <property type="evidence" value="ECO:0007669"/>
    <property type="project" value="UniProtKB-UniRule"/>
</dbReference>
<dbReference type="GO" id="GO:0009245">
    <property type="term" value="P:lipid A biosynthetic process"/>
    <property type="evidence" value="ECO:0007669"/>
    <property type="project" value="UniProtKB-UniRule"/>
</dbReference>
<dbReference type="GO" id="GO:0009244">
    <property type="term" value="P:lipopolysaccharide core region biosynthetic process"/>
    <property type="evidence" value="ECO:0007669"/>
    <property type="project" value="TreeGrafter"/>
</dbReference>
<dbReference type="HAMAP" id="MF_00409">
    <property type="entry name" value="LpxK"/>
    <property type="match status" value="1"/>
</dbReference>
<dbReference type="InterPro" id="IPR003758">
    <property type="entry name" value="LpxK"/>
</dbReference>
<dbReference type="InterPro" id="IPR027417">
    <property type="entry name" value="P-loop_NTPase"/>
</dbReference>
<dbReference type="NCBIfam" id="TIGR00682">
    <property type="entry name" value="lpxK"/>
    <property type="match status" value="1"/>
</dbReference>
<dbReference type="PANTHER" id="PTHR42724">
    <property type="entry name" value="TETRAACYLDISACCHARIDE 4'-KINASE"/>
    <property type="match status" value="1"/>
</dbReference>
<dbReference type="PANTHER" id="PTHR42724:SF1">
    <property type="entry name" value="TETRAACYLDISACCHARIDE 4'-KINASE, MITOCHONDRIAL-RELATED"/>
    <property type="match status" value="1"/>
</dbReference>
<dbReference type="Pfam" id="PF02606">
    <property type="entry name" value="LpxK"/>
    <property type="match status" value="1"/>
</dbReference>
<dbReference type="SUPFAM" id="SSF52540">
    <property type="entry name" value="P-loop containing nucleoside triphosphate hydrolases"/>
    <property type="match status" value="1"/>
</dbReference>